<name>RL24_GLUOX</name>
<sequence length="106" mass="11390">MAARIKKGDQVLVLSGKSRGVRGEVLAVMPKAEKAVVRGVAVAKRHTKPNRMGGEGGIIEREMPIHLSNLKLVDPKSGKPTRVGFRILEDGRKVRVAKATGEVIEG</sequence>
<gene>
    <name evidence="1" type="primary">rplX</name>
    <name type="ordered locus">GOX0369</name>
</gene>
<proteinExistence type="inferred from homology"/>
<feature type="chain" id="PRO_0000241605" description="Large ribosomal subunit protein uL24">
    <location>
        <begin position="1"/>
        <end position="106"/>
    </location>
</feature>
<comment type="function">
    <text evidence="1">One of two assembly initiator proteins, it binds directly to the 5'-end of the 23S rRNA, where it nucleates assembly of the 50S subunit.</text>
</comment>
<comment type="function">
    <text evidence="1">One of the proteins that surrounds the polypeptide exit tunnel on the outside of the subunit.</text>
</comment>
<comment type="subunit">
    <text evidence="1">Part of the 50S ribosomal subunit.</text>
</comment>
<comment type="similarity">
    <text evidence="1">Belongs to the universal ribosomal protein uL24 family.</text>
</comment>
<reference key="1">
    <citation type="journal article" date="2005" name="Nat. Biotechnol.">
        <title>Complete genome sequence of the acetic acid bacterium Gluconobacter oxydans.</title>
        <authorList>
            <person name="Prust C."/>
            <person name="Hoffmeister M."/>
            <person name="Liesegang H."/>
            <person name="Wiezer A."/>
            <person name="Fricke W.F."/>
            <person name="Ehrenreich A."/>
            <person name="Gottschalk G."/>
            <person name="Deppenmeier U."/>
        </authorList>
    </citation>
    <scope>NUCLEOTIDE SEQUENCE [LARGE SCALE GENOMIC DNA]</scope>
    <source>
        <strain>621H</strain>
    </source>
</reference>
<keyword id="KW-1185">Reference proteome</keyword>
<keyword id="KW-0687">Ribonucleoprotein</keyword>
<keyword id="KW-0689">Ribosomal protein</keyword>
<keyword id="KW-0694">RNA-binding</keyword>
<keyword id="KW-0699">rRNA-binding</keyword>
<organism>
    <name type="scientific">Gluconobacter oxydans (strain 621H)</name>
    <name type="common">Gluconobacter suboxydans</name>
    <dbReference type="NCBI Taxonomy" id="290633"/>
    <lineage>
        <taxon>Bacteria</taxon>
        <taxon>Pseudomonadati</taxon>
        <taxon>Pseudomonadota</taxon>
        <taxon>Alphaproteobacteria</taxon>
        <taxon>Acetobacterales</taxon>
        <taxon>Acetobacteraceae</taxon>
        <taxon>Gluconobacter</taxon>
    </lineage>
</organism>
<dbReference type="EMBL" id="CP000009">
    <property type="protein sequence ID" value="AAW60152.1"/>
    <property type="molecule type" value="Genomic_DNA"/>
</dbReference>
<dbReference type="RefSeq" id="WP_011251955.1">
    <property type="nucleotide sequence ID" value="NZ_LT900338.1"/>
</dbReference>
<dbReference type="SMR" id="Q5FTZ4"/>
<dbReference type="STRING" id="290633.GOX0369"/>
<dbReference type="GeneID" id="56904635"/>
<dbReference type="KEGG" id="gox:GOX0369"/>
<dbReference type="eggNOG" id="COG0198">
    <property type="taxonomic scope" value="Bacteria"/>
</dbReference>
<dbReference type="HOGENOM" id="CLU_093315_2_0_5"/>
<dbReference type="Proteomes" id="UP000006375">
    <property type="component" value="Chromosome"/>
</dbReference>
<dbReference type="GO" id="GO:1990904">
    <property type="term" value="C:ribonucleoprotein complex"/>
    <property type="evidence" value="ECO:0007669"/>
    <property type="project" value="UniProtKB-KW"/>
</dbReference>
<dbReference type="GO" id="GO:0005840">
    <property type="term" value="C:ribosome"/>
    <property type="evidence" value="ECO:0007669"/>
    <property type="project" value="UniProtKB-KW"/>
</dbReference>
<dbReference type="GO" id="GO:0019843">
    <property type="term" value="F:rRNA binding"/>
    <property type="evidence" value="ECO:0007669"/>
    <property type="project" value="UniProtKB-UniRule"/>
</dbReference>
<dbReference type="GO" id="GO:0003735">
    <property type="term" value="F:structural constituent of ribosome"/>
    <property type="evidence" value="ECO:0007669"/>
    <property type="project" value="InterPro"/>
</dbReference>
<dbReference type="GO" id="GO:0006412">
    <property type="term" value="P:translation"/>
    <property type="evidence" value="ECO:0007669"/>
    <property type="project" value="UniProtKB-UniRule"/>
</dbReference>
<dbReference type="CDD" id="cd06089">
    <property type="entry name" value="KOW_RPL26"/>
    <property type="match status" value="1"/>
</dbReference>
<dbReference type="FunFam" id="2.30.30.30:FF:000004">
    <property type="entry name" value="50S ribosomal protein L24"/>
    <property type="match status" value="1"/>
</dbReference>
<dbReference type="Gene3D" id="2.30.30.30">
    <property type="match status" value="1"/>
</dbReference>
<dbReference type="HAMAP" id="MF_01326_B">
    <property type="entry name" value="Ribosomal_uL24_B"/>
    <property type="match status" value="1"/>
</dbReference>
<dbReference type="InterPro" id="IPR005824">
    <property type="entry name" value="KOW"/>
</dbReference>
<dbReference type="InterPro" id="IPR014722">
    <property type="entry name" value="Rib_uL2_dom2"/>
</dbReference>
<dbReference type="InterPro" id="IPR003256">
    <property type="entry name" value="Ribosomal_uL24"/>
</dbReference>
<dbReference type="InterPro" id="IPR005825">
    <property type="entry name" value="Ribosomal_uL24_CS"/>
</dbReference>
<dbReference type="InterPro" id="IPR041988">
    <property type="entry name" value="Ribosomal_uL24_KOW"/>
</dbReference>
<dbReference type="InterPro" id="IPR008991">
    <property type="entry name" value="Translation_prot_SH3-like_sf"/>
</dbReference>
<dbReference type="NCBIfam" id="TIGR01079">
    <property type="entry name" value="rplX_bact"/>
    <property type="match status" value="1"/>
</dbReference>
<dbReference type="PANTHER" id="PTHR12903">
    <property type="entry name" value="MITOCHONDRIAL RIBOSOMAL PROTEIN L24"/>
    <property type="match status" value="1"/>
</dbReference>
<dbReference type="Pfam" id="PF17136">
    <property type="entry name" value="ribosomal_L24"/>
    <property type="match status" value="1"/>
</dbReference>
<dbReference type="SMART" id="SM00739">
    <property type="entry name" value="KOW"/>
    <property type="match status" value="1"/>
</dbReference>
<dbReference type="SUPFAM" id="SSF50104">
    <property type="entry name" value="Translation proteins SH3-like domain"/>
    <property type="match status" value="1"/>
</dbReference>
<dbReference type="PROSITE" id="PS01108">
    <property type="entry name" value="RIBOSOMAL_L24"/>
    <property type="match status" value="1"/>
</dbReference>
<accession>Q5FTZ4</accession>
<evidence type="ECO:0000255" key="1">
    <source>
        <dbReference type="HAMAP-Rule" id="MF_01326"/>
    </source>
</evidence>
<evidence type="ECO:0000305" key="2"/>
<protein>
    <recommendedName>
        <fullName evidence="1">Large ribosomal subunit protein uL24</fullName>
    </recommendedName>
    <alternativeName>
        <fullName evidence="2">50S ribosomal protein L24</fullName>
    </alternativeName>
</protein>